<gene>
    <name type="primary">ethR</name>
    <name type="synonym">etaR</name>
    <name type="ordered locus">Rv3855</name>
</gene>
<name>ETHR_MYCTU</name>
<sequence>MTTSAASQASLPRGRRTARPSGDDRELAILATAENLLEDRPLADISVDDLAKGAGISRPTFYFYFPSKEAVLLTLLDRVVNQADMALQTLAENPADTDRENMWRTGINVFFETFGSHKAVTRAGQAARATSVEVAELWSTFMQKWIAYTAAVIDAERDRGAAPRTLPAHELATALNLMNERTLFASFAGEQPSVPEARVLDTLVHIWVTSIYGENR</sequence>
<evidence type="ECO:0000255" key="1">
    <source>
        <dbReference type="PROSITE-ProRule" id="PRU00335"/>
    </source>
</evidence>
<evidence type="ECO:0000256" key="2">
    <source>
        <dbReference type="SAM" id="MobiDB-lite"/>
    </source>
</evidence>
<evidence type="ECO:0000269" key="3">
    <source>
    </source>
</evidence>
<evidence type="ECO:0000269" key="4">
    <source>
    </source>
</evidence>
<evidence type="ECO:0000269" key="5">
    <source>
    </source>
</evidence>
<evidence type="ECO:0000269" key="6">
    <source>
    </source>
</evidence>
<evidence type="ECO:0007829" key="7">
    <source>
        <dbReference type="PDB" id="7NGG"/>
    </source>
</evidence>
<accession>P9WMC1</accession>
<accession>L0TDZ6</accession>
<accession>P96222</accession>
<accession>Q7D4Q7</accession>
<reference key="1">
    <citation type="journal article" date="1998" name="Nature">
        <title>Deciphering the biology of Mycobacterium tuberculosis from the complete genome sequence.</title>
        <authorList>
            <person name="Cole S.T."/>
            <person name="Brosch R."/>
            <person name="Parkhill J."/>
            <person name="Garnier T."/>
            <person name="Churcher C.M."/>
            <person name="Harris D.E."/>
            <person name="Gordon S.V."/>
            <person name="Eiglmeier K."/>
            <person name="Gas S."/>
            <person name="Barry C.E. III"/>
            <person name="Tekaia F."/>
            <person name="Badcock K."/>
            <person name="Basham D."/>
            <person name="Brown D."/>
            <person name="Chillingworth T."/>
            <person name="Connor R."/>
            <person name="Davies R.M."/>
            <person name="Devlin K."/>
            <person name="Feltwell T."/>
            <person name="Gentles S."/>
            <person name="Hamlin N."/>
            <person name="Holroyd S."/>
            <person name="Hornsby T."/>
            <person name="Jagels K."/>
            <person name="Krogh A."/>
            <person name="McLean J."/>
            <person name="Moule S."/>
            <person name="Murphy L.D."/>
            <person name="Oliver S."/>
            <person name="Osborne J."/>
            <person name="Quail M.A."/>
            <person name="Rajandream M.A."/>
            <person name="Rogers J."/>
            <person name="Rutter S."/>
            <person name="Seeger K."/>
            <person name="Skelton S."/>
            <person name="Squares S."/>
            <person name="Squares R."/>
            <person name="Sulston J.E."/>
            <person name="Taylor K."/>
            <person name="Whitehead S."/>
            <person name="Barrell B.G."/>
        </authorList>
    </citation>
    <scope>NUCLEOTIDE SEQUENCE [LARGE SCALE GENOMIC DNA]</scope>
    <source>
        <strain>ATCC 25618 / H37Rv</strain>
    </source>
</reference>
<reference key="2">
    <citation type="journal article" date="2000" name="J. Biol. Chem.">
        <title>Activation of the pro-drug ethionamide is regulated in mycobacteria.</title>
        <authorList>
            <person name="Baulard A.R."/>
            <person name="Betts J.C."/>
            <person name="Engohang-Ndong J."/>
            <person name="Quan S."/>
            <person name="McAdam R.A."/>
            <person name="Brennan P.J."/>
            <person name="Locht C."/>
            <person name="Besra G.S."/>
        </authorList>
    </citation>
    <scope>FUNCTION AS A REPRESSOR OF ETHA</scope>
    <scope>NOMENCLATURE</scope>
    <source>
        <strain>ATCC 25618 / H37Rv</strain>
    </source>
</reference>
<reference key="3">
    <citation type="journal article" date="2000" name="Proc. Natl. Acad. Sci. U.S.A.">
        <title>Ethionamide activation and sensitivity in multidrug-resistant Mycobacterium tuberculosis.</title>
        <authorList>
            <person name="DeBarber A.E."/>
            <person name="Mdluli K."/>
            <person name="Bosman M."/>
            <person name="Bekker L.G."/>
            <person name="Barry C.E. III"/>
        </authorList>
    </citation>
    <scope>FUNCTION IN ETH RESISTANCE</scope>
    <scope>NOMENCLATURE</scope>
    <source>
        <strain>ATCC 25618 / H37Rv</strain>
    </source>
</reference>
<reference key="4">
    <citation type="journal article" date="2011" name="Mol. Cell. Proteomics">
        <title>Proteogenomic analysis of Mycobacterium tuberculosis by high resolution mass spectrometry.</title>
        <authorList>
            <person name="Kelkar D.S."/>
            <person name="Kumar D."/>
            <person name="Kumar P."/>
            <person name="Balakrishnan L."/>
            <person name="Muthusamy B."/>
            <person name="Yadav A.K."/>
            <person name="Shrivastava P."/>
            <person name="Marimuthu A."/>
            <person name="Anand S."/>
            <person name="Sundaram H."/>
            <person name="Kingsbury R."/>
            <person name="Harsha H.C."/>
            <person name="Nair B."/>
            <person name="Prasad T.S."/>
            <person name="Chauhan D.S."/>
            <person name="Katoch K."/>
            <person name="Katoch V.M."/>
            <person name="Kumar P."/>
            <person name="Chaerkady R."/>
            <person name="Ramachandran S."/>
            <person name="Dash D."/>
            <person name="Pandey A."/>
        </authorList>
    </citation>
    <scope>IDENTIFICATION BY MASS SPECTROMETRY [LARGE SCALE ANALYSIS]</scope>
    <source>
        <strain>ATCC 25618 / H37Rv</strain>
    </source>
</reference>
<reference key="5">
    <citation type="journal article" date="2004" name="J. Mol. Biol.">
        <title>Crystal structure of the TetR/CamR family repressor Mycobacterium tuberculosis EthR implicated in ethionamide resistance.</title>
        <authorList>
            <person name="Dover L.G."/>
            <person name="Corsino P.E."/>
            <person name="Daniels I.R."/>
            <person name="Cocklin S.L."/>
            <person name="Tatituri V."/>
            <person name="Besra G.S."/>
            <person name="Futterer K."/>
        </authorList>
    </citation>
    <scope>X-RAY CRYSTALLOGRAPHY (1.7 ANGSTROMS)</scope>
    <scope>SUBUNIT</scope>
    <source>
        <strain>ATCC 25618 / H37Rv</strain>
    </source>
</reference>
<reference key="6">
    <citation type="journal article" date="2009" name="Nat. Med.">
        <title>Synthetic EthR inhibitors boost antituberculous activity of ethionamide.</title>
        <authorList>
            <person name="Willand N."/>
            <person name="Dirie B."/>
            <person name="Carette X."/>
            <person name="Bifani P."/>
            <person name="Singhal A."/>
            <person name="Desroses M."/>
            <person name="Leroux F."/>
            <person name="Willery E."/>
            <person name="Mathys V."/>
            <person name="Deprez-Poulain R."/>
            <person name="Delcroix G."/>
            <person name="Frenois F."/>
            <person name="Aumercier M."/>
            <person name="Locht C."/>
            <person name="Villeret V."/>
            <person name="Deprez B."/>
            <person name="Baulard A.R."/>
        </authorList>
    </citation>
    <scope>X-RAY CRYSTALLOGRAPHY (1.7 ANGSTROMS) IN COMPLEX WITH SUBSTRATE ANALOG</scope>
    <scope>ACTIVITY REGULATION</scope>
    <scope>DISRUPTION PHENOTYPE</scope>
    <source>
        <strain>ATCC 25618 / H37Rv</strain>
    </source>
</reference>
<dbReference type="EMBL" id="AL123456">
    <property type="protein sequence ID" value="CCP46684.1"/>
    <property type="molecule type" value="Genomic_DNA"/>
</dbReference>
<dbReference type="PIR" id="D70655">
    <property type="entry name" value="D70655"/>
</dbReference>
<dbReference type="RefSeq" id="NP_218372.1">
    <property type="nucleotide sequence ID" value="NC_000962.3"/>
</dbReference>
<dbReference type="RefSeq" id="WP_003399797.1">
    <property type="nucleotide sequence ID" value="NZ_NVQJ01000057.1"/>
</dbReference>
<dbReference type="PDB" id="1T56">
    <property type="method" value="X-ray"/>
    <property type="resolution" value="1.70 A"/>
    <property type="chains" value="A=1-216"/>
</dbReference>
<dbReference type="PDB" id="1U9N">
    <property type="method" value="X-ray"/>
    <property type="resolution" value="2.30 A"/>
    <property type="chains" value="A=2-216"/>
</dbReference>
<dbReference type="PDB" id="1U9O">
    <property type="method" value="X-ray"/>
    <property type="resolution" value="3.30 A"/>
    <property type="chains" value="A/B=2-216"/>
</dbReference>
<dbReference type="PDB" id="3G1L">
    <property type="method" value="X-ray"/>
    <property type="resolution" value="1.70 A"/>
    <property type="chains" value="A=1-216"/>
</dbReference>
<dbReference type="PDB" id="3G1M">
    <property type="method" value="X-ray"/>
    <property type="resolution" value="1.70 A"/>
    <property type="chains" value="A=1-216"/>
</dbReference>
<dbReference type="PDB" id="3G1O">
    <property type="method" value="X-ray"/>
    <property type="resolution" value="1.85 A"/>
    <property type="chains" value="A=1-216"/>
</dbReference>
<dbReference type="PDB" id="3O8G">
    <property type="method" value="X-ray"/>
    <property type="resolution" value="1.90 A"/>
    <property type="chains" value="A=1-216"/>
</dbReference>
<dbReference type="PDB" id="3O8H">
    <property type="method" value="X-ray"/>
    <property type="resolution" value="1.90 A"/>
    <property type="chains" value="A=1-216"/>
</dbReference>
<dbReference type="PDB" id="3Q0U">
    <property type="method" value="X-ray"/>
    <property type="resolution" value="1.70 A"/>
    <property type="chains" value="A=1-216"/>
</dbReference>
<dbReference type="PDB" id="3Q0V">
    <property type="method" value="X-ray"/>
    <property type="resolution" value="1.95 A"/>
    <property type="chains" value="A/B=1-216"/>
</dbReference>
<dbReference type="PDB" id="3Q0W">
    <property type="method" value="X-ray"/>
    <property type="resolution" value="1.60 A"/>
    <property type="chains" value="A=1-216"/>
</dbReference>
<dbReference type="PDB" id="3Q3S">
    <property type="method" value="X-ray"/>
    <property type="resolution" value="2.00 A"/>
    <property type="chains" value="A=1-216"/>
</dbReference>
<dbReference type="PDB" id="3QPL">
    <property type="method" value="X-ray"/>
    <property type="resolution" value="3.20 A"/>
    <property type="chains" value="A=1-216"/>
</dbReference>
<dbReference type="PDB" id="3SDG">
    <property type="method" value="X-ray"/>
    <property type="resolution" value="1.87 A"/>
    <property type="chains" value="A=1-216"/>
</dbReference>
<dbReference type="PDB" id="3SFI">
    <property type="method" value="X-ray"/>
    <property type="resolution" value="2.31 A"/>
    <property type="chains" value="A=1-216"/>
</dbReference>
<dbReference type="PDB" id="3TP0">
    <property type="method" value="X-ray"/>
    <property type="resolution" value="1.90 A"/>
    <property type="chains" value="A=1-216"/>
</dbReference>
<dbReference type="PDB" id="3TP3">
    <property type="method" value="X-ray"/>
    <property type="resolution" value="1.86 A"/>
    <property type="chains" value="A=1-216"/>
</dbReference>
<dbReference type="PDB" id="4DW6">
    <property type="method" value="X-ray"/>
    <property type="resolution" value="2.00 A"/>
    <property type="chains" value="A=1-216"/>
</dbReference>
<dbReference type="PDB" id="4M3B">
    <property type="method" value="X-ray"/>
    <property type="resolution" value="2.00 A"/>
    <property type="chains" value="A=1-216"/>
</dbReference>
<dbReference type="PDB" id="4M3D">
    <property type="method" value="X-ray"/>
    <property type="resolution" value="1.90 A"/>
    <property type="chains" value="A=1-216"/>
</dbReference>
<dbReference type="PDB" id="4M3E">
    <property type="method" value="X-ray"/>
    <property type="resolution" value="2.11 A"/>
    <property type="chains" value="A=1-216"/>
</dbReference>
<dbReference type="PDB" id="4M3G">
    <property type="method" value="X-ray"/>
    <property type="resolution" value="2.30 A"/>
    <property type="chains" value="A=1-216"/>
</dbReference>
<dbReference type="PDB" id="5EYR">
    <property type="method" value="X-ray"/>
    <property type="resolution" value="1.57 A"/>
    <property type="chains" value="A=2-216"/>
</dbReference>
<dbReference type="PDB" id="5EZG">
    <property type="method" value="X-ray"/>
    <property type="resolution" value="1.84 A"/>
    <property type="chains" value="A=2-216"/>
</dbReference>
<dbReference type="PDB" id="5EZH">
    <property type="method" value="X-ray"/>
    <property type="resolution" value="1.70 A"/>
    <property type="chains" value="A=2-216"/>
</dbReference>
<dbReference type="PDB" id="5F04">
    <property type="method" value="X-ray"/>
    <property type="resolution" value="1.84 A"/>
    <property type="chains" value="A=2-216"/>
</dbReference>
<dbReference type="PDB" id="5F08">
    <property type="method" value="X-ray"/>
    <property type="resolution" value="1.92 A"/>
    <property type="chains" value="A=2-216"/>
</dbReference>
<dbReference type="PDB" id="5F0C">
    <property type="method" value="X-ray"/>
    <property type="resolution" value="1.87 A"/>
    <property type="chains" value="A=2-216"/>
</dbReference>
<dbReference type="PDB" id="5F0F">
    <property type="method" value="X-ray"/>
    <property type="resolution" value="1.76 A"/>
    <property type="chains" value="A=2-216"/>
</dbReference>
<dbReference type="PDB" id="5F0H">
    <property type="method" value="X-ray"/>
    <property type="resolution" value="1.99 A"/>
    <property type="chains" value="A=2-216"/>
</dbReference>
<dbReference type="PDB" id="5F1J">
    <property type="method" value="X-ray"/>
    <property type="resolution" value="1.63 A"/>
    <property type="chains" value="A=2-216"/>
</dbReference>
<dbReference type="PDB" id="5F27">
    <property type="method" value="X-ray"/>
    <property type="resolution" value="1.68 A"/>
    <property type="chains" value="A=2-216"/>
</dbReference>
<dbReference type="PDB" id="5J1R">
    <property type="method" value="X-ray"/>
    <property type="resolution" value="1.92 A"/>
    <property type="chains" value="A=1-216"/>
</dbReference>
<dbReference type="PDB" id="5J1U">
    <property type="method" value="X-ray"/>
    <property type="resolution" value="1.80 A"/>
    <property type="chains" value="A=1-216"/>
</dbReference>
<dbReference type="PDB" id="5J1Y">
    <property type="method" value="X-ray"/>
    <property type="resolution" value="1.81 A"/>
    <property type="chains" value="A=1-216"/>
</dbReference>
<dbReference type="PDB" id="5J3L">
    <property type="method" value="X-ray"/>
    <property type="resolution" value="1.66 A"/>
    <property type="chains" value="A=1-216"/>
</dbReference>
<dbReference type="PDB" id="5MWO">
    <property type="method" value="X-ray"/>
    <property type="resolution" value="1.96 A"/>
    <property type="chains" value="A=1-216"/>
</dbReference>
<dbReference type="PDB" id="5MXK">
    <property type="method" value="X-ray"/>
    <property type="resolution" value="1.93 A"/>
    <property type="chains" value="A=1-216"/>
</dbReference>
<dbReference type="PDB" id="5MXV">
    <property type="method" value="X-ray"/>
    <property type="resolution" value="1.63 A"/>
    <property type="chains" value="A=2-216"/>
</dbReference>
<dbReference type="PDB" id="5MYL">
    <property type="method" value="X-ray"/>
    <property type="resolution" value="1.72 A"/>
    <property type="chains" value="A=1-216"/>
</dbReference>
<dbReference type="PDB" id="5MYM">
    <property type="method" value="X-ray"/>
    <property type="resolution" value="2.28 A"/>
    <property type="chains" value="A/B/C/D=1-216"/>
</dbReference>
<dbReference type="PDB" id="5MYN">
    <property type="method" value="X-ray"/>
    <property type="resolution" value="1.56 A"/>
    <property type="chains" value="A=1-216"/>
</dbReference>
<dbReference type="PDB" id="5MYR">
    <property type="method" value="X-ray"/>
    <property type="resolution" value="1.83 A"/>
    <property type="chains" value="A=2-216"/>
</dbReference>
<dbReference type="PDB" id="5MYS">
    <property type="method" value="X-ray"/>
    <property type="resolution" value="1.59 A"/>
    <property type="chains" value="A=2-216"/>
</dbReference>
<dbReference type="PDB" id="5MYT">
    <property type="method" value="X-ray"/>
    <property type="resolution" value="1.61 A"/>
    <property type="chains" value="A=2-216"/>
</dbReference>
<dbReference type="PDB" id="5MYW">
    <property type="method" value="X-ray"/>
    <property type="resolution" value="1.77 A"/>
    <property type="chains" value="A=2-216"/>
</dbReference>
<dbReference type="PDB" id="5NIM">
    <property type="method" value="X-ray"/>
    <property type="resolution" value="1.50 A"/>
    <property type="chains" value="A=1-216"/>
</dbReference>
<dbReference type="PDB" id="5NIO">
    <property type="method" value="X-ray"/>
    <property type="resolution" value="1.40 A"/>
    <property type="chains" value="A=1-216"/>
</dbReference>
<dbReference type="PDB" id="5NIZ">
    <property type="method" value="X-ray"/>
    <property type="resolution" value="1.95 A"/>
    <property type="chains" value="A=1-216"/>
</dbReference>
<dbReference type="PDB" id="5NJ0">
    <property type="method" value="X-ray"/>
    <property type="resolution" value="2.10 A"/>
    <property type="chains" value="A=1-216"/>
</dbReference>
<dbReference type="PDB" id="5NZ0">
    <property type="method" value="X-ray"/>
    <property type="resolution" value="1.82 A"/>
    <property type="chains" value="A=2-216"/>
</dbReference>
<dbReference type="PDB" id="5NZ1">
    <property type="method" value="X-ray"/>
    <property type="resolution" value="2.33 A"/>
    <property type="chains" value="A/B/C/D/E/F/G/H=2-216"/>
</dbReference>
<dbReference type="PDB" id="6HNX">
    <property type="method" value="X-ray"/>
    <property type="resolution" value="1.70 A"/>
    <property type="chains" value="A=1-216"/>
</dbReference>
<dbReference type="PDB" id="6HNZ">
    <property type="method" value="X-ray"/>
    <property type="resolution" value="1.70 A"/>
    <property type="chains" value="A=1-216"/>
</dbReference>
<dbReference type="PDB" id="6HO0">
    <property type="method" value="X-ray"/>
    <property type="resolution" value="1.90 A"/>
    <property type="chains" value="A=1-216"/>
</dbReference>
<dbReference type="PDB" id="6HO1">
    <property type="method" value="X-ray"/>
    <property type="resolution" value="2.00 A"/>
    <property type="chains" value="A=1-216"/>
</dbReference>
<dbReference type="PDB" id="6HO2">
    <property type="method" value="X-ray"/>
    <property type="resolution" value="1.90 A"/>
    <property type="chains" value="A=1-216"/>
</dbReference>
<dbReference type="PDB" id="6HO3">
    <property type="method" value="X-ray"/>
    <property type="resolution" value="2.40 A"/>
    <property type="chains" value="A=1-216"/>
</dbReference>
<dbReference type="PDB" id="6HO4">
    <property type="method" value="X-ray"/>
    <property type="resolution" value="1.60 A"/>
    <property type="chains" value="A=1-216"/>
</dbReference>
<dbReference type="PDB" id="6HO5">
    <property type="method" value="X-ray"/>
    <property type="resolution" value="2.30 A"/>
    <property type="chains" value="A=1-216"/>
</dbReference>
<dbReference type="PDB" id="6HO6">
    <property type="method" value="X-ray"/>
    <property type="resolution" value="1.90 A"/>
    <property type="chains" value="A=1-216"/>
</dbReference>
<dbReference type="PDB" id="6HO7">
    <property type="method" value="X-ray"/>
    <property type="resolution" value="2.50 A"/>
    <property type="chains" value="A=1-216"/>
</dbReference>
<dbReference type="PDB" id="6HO8">
    <property type="method" value="X-ray"/>
    <property type="resolution" value="1.98 A"/>
    <property type="chains" value="A=1-216"/>
</dbReference>
<dbReference type="PDB" id="6HO9">
    <property type="method" value="X-ray"/>
    <property type="resolution" value="1.80 A"/>
    <property type="chains" value="A=1-216"/>
</dbReference>
<dbReference type="PDB" id="6HOA">
    <property type="method" value="X-ray"/>
    <property type="resolution" value="1.50 A"/>
    <property type="chains" value="A=1-216"/>
</dbReference>
<dbReference type="PDB" id="6HOB">
    <property type="method" value="X-ray"/>
    <property type="resolution" value="1.80 A"/>
    <property type="chains" value="A=1-216"/>
</dbReference>
<dbReference type="PDB" id="6HOC">
    <property type="method" value="X-ray"/>
    <property type="resolution" value="2.50 A"/>
    <property type="chains" value="A=1-216"/>
</dbReference>
<dbReference type="PDB" id="6HOD">
    <property type="method" value="X-ray"/>
    <property type="resolution" value="1.70 A"/>
    <property type="chains" value="A=1-216"/>
</dbReference>
<dbReference type="PDB" id="6HOE">
    <property type="method" value="X-ray"/>
    <property type="resolution" value="1.90 A"/>
    <property type="chains" value="A=1-216"/>
</dbReference>
<dbReference type="PDB" id="6HOF">
    <property type="method" value="X-ray"/>
    <property type="resolution" value="1.80 A"/>
    <property type="chains" value="A=1-216"/>
</dbReference>
<dbReference type="PDB" id="6R1P">
    <property type="method" value="X-ray"/>
    <property type="resolution" value="1.80 A"/>
    <property type="chains" value="A=1-216"/>
</dbReference>
<dbReference type="PDB" id="6R1S">
    <property type="method" value="X-ray"/>
    <property type="resolution" value="1.80 A"/>
    <property type="chains" value="A=1-216"/>
</dbReference>
<dbReference type="PDB" id="7NGD">
    <property type="method" value="X-ray"/>
    <property type="resolution" value="1.47 A"/>
    <property type="chains" value="A=1-216"/>
</dbReference>
<dbReference type="PDB" id="7NGG">
    <property type="method" value="X-ray"/>
    <property type="resolution" value="1.17 A"/>
    <property type="chains" value="C=1-216"/>
</dbReference>
<dbReference type="PDB" id="7NGI">
    <property type="method" value="X-ray"/>
    <property type="resolution" value="1.70 A"/>
    <property type="chains" value="A=1-216"/>
</dbReference>
<dbReference type="PDB" id="7NGJ">
    <property type="method" value="X-ray"/>
    <property type="resolution" value="1.89 A"/>
    <property type="chains" value="A=1-216"/>
</dbReference>
<dbReference type="PDB" id="7NGK">
    <property type="method" value="X-ray"/>
    <property type="resolution" value="1.89 A"/>
    <property type="chains" value="A=1-216"/>
</dbReference>
<dbReference type="PDB" id="7NGM">
    <property type="method" value="X-ray"/>
    <property type="resolution" value="1.76 A"/>
    <property type="chains" value="A=1-216"/>
</dbReference>
<dbReference type="PDB" id="7NGN">
    <property type="method" value="X-ray"/>
    <property type="resolution" value="1.55 A"/>
    <property type="chains" value="A=1-216"/>
</dbReference>
<dbReference type="PDB" id="7NGO">
    <property type="method" value="X-ray"/>
    <property type="resolution" value="2.37 A"/>
    <property type="chains" value="A=1-216"/>
</dbReference>
<dbReference type="PDB" id="7NGR">
    <property type="method" value="X-ray"/>
    <property type="resolution" value="1.92 A"/>
    <property type="chains" value="A=1-216"/>
</dbReference>
<dbReference type="PDB" id="7NGS">
    <property type="method" value="X-ray"/>
    <property type="resolution" value="2.50 A"/>
    <property type="chains" value="A=1-216"/>
</dbReference>
<dbReference type="PDB" id="7NGT">
    <property type="method" value="X-ray"/>
    <property type="resolution" value="2.49 A"/>
    <property type="chains" value="A=1-216"/>
</dbReference>
<dbReference type="PDB" id="7NGU">
    <property type="method" value="X-ray"/>
    <property type="resolution" value="1.26 A"/>
    <property type="chains" value="A=1-216"/>
</dbReference>
<dbReference type="PDB" id="7NGW">
    <property type="method" value="X-ray"/>
    <property type="resolution" value="1.26 A"/>
    <property type="chains" value="A=1-216"/>
</dbReference>
<dbReference type="PDB" id="7NGX">
    <property type="method" value="X-ray"/>
    <property type="resolution" value="1.24 A"/>
    <property type="chains" value="A=1-216"/>
</dbReference>
<dbReference type="PDB" id="7NGY">
    <property type="method" value="X-ray"/>
    <property type="resolution" value="1.27 A"/>
    <property type="chains" value="A=1-216"/>
</dbReference>
<dbReference type="PDBsum" id="1T56"/>
<dbReference type="PDBsum" id="1U9N"/>
<dbReference type="PDBsum" id="1U9O"/>
<dbReference type="PDBsum" id="3G1L"/>
<dbReference type="PDBsum" id="3G1M"/>
<dbReference type="PDBsum" id="3G1O"/>
<dbReference type="PDBsum" id="3O8G"/>
<dbReference type="PDBsum" id="3O8H"/>
<dbReference type="PDBsum" id="3Q0U"/>
<dbReference type="PDBsum" id="3Q0V"/>
<dbReference type="PDBsum" id="3Q0W"/>
<dbReference type="PDBsum" id="3Q3S"/>
<dbReference type="PDBsum" id="3QPL"/>
<dbReference type="PDBsum" id="3SDG"/>
<dbReference type="PDBsum" id="3SFI"/>
<dbReference type="PDBsum" id="3TP0"/>
<dbReference type="PDBsum" id="3TP3"/>
<dbReference type="PDBsum" id="4DW6"/>
<dbReference type="PDBsum" id="4M3B"/>
<dbReference type="PDBsum" id="4M3D"/>
<dbReference type="PDBsum" id="4M3E"/>
<dbReference type="PDBsum" id="4M3G"/>
<dbReference type="PDBsum" id="5EYR"/>
<dbReference type="PDBsum" id="5EZG"/>
<dbReference type="PDBsum" id="5EZH"/>
<dbReference type="PDBsum" id="5F04"/>
<dbReference type="PDBsum" id="5F08"/>
<dbReference type="PDBsum" id="5F0C"/>
<dbReference type="PDBsum" id="5F0F"/>
<dbReference type="PDBsum" id="5F0H"/>
<dbReference type="PDBsum" id="5F1J"/>
<dbReference type="PDBsum" id="5F27"/>
<dbReference type="PDBsum" id="5J1R"/>
<dbReference type="PDBsum" id="5J1U"/>
<dbReference type="PDBsum" id="5J1Y"/>
<dbReference type="PDBsum" id="5J3L"/>
<dbReference type="PDBsum" id="5MWO"/>
<dbReference type="PDBsum" id="5MXK"/>
<dbReference type="PDBsum" id="5MXV"/>
<dbReference type="PDBsum" id="5MYL"/>
<dbReference type="PDBsum" id="5MYM"/>
<dbReference type="PDBsum" id="5MYN"/>
<dbReference type="PDBsum" id="5MYR"/>
<dbReference type="PDBsum" id="5MYS"/>
<dbReference type="PDBsum" id="5MYT"/>
<dbReference type="PDBsum" id="5MYW"/>
<dbReference type="PDBsum" id="5NIM"/>
<dbReference type="PDBsum" id="5NIO"/>
<dbReference type="PDBsum" id="5NIZ"/>
<dbReference type="PDBsum" id="5NJ0"/>
<dbReference type="PDBsum" id="5NZ0"/>
<dbReference type="PDBsum" id="5NZ1"/>
<dbReference type="PDBsum" id="6HNX"/>
<dbReference type="PDBsum" id="6HNZ"/>
<dbReference type="PDBsum" id="6HO0"/>
<dbReference type="PDBsum" id="6HO1"/>
<dbReference type="PDBsum" id="6HO2"/>
<dbReference type="PDBsum" id="6HO3"/>
<dbReference type="PDBsum" id="6HO4"/>
<dbReference type="PDBsum" id="6HO5"/>
<dbReference type="PDBsum" id="6HO6"/>
<dbReference type="PDBsum" id="6HO7"/>
<dbReference type="PDBsum" id="6HO8"/>
<dbReference type="PDBsum" id="6HO9"/>
<dbReference type="PDBsum" id="6HOA"/>
<dbReference type="PDBsum" id="6HOB"/>
<dbReference type="PDBsum" id="6HOC"/>
<dbReference type="PDBsum" id="6HOD"/>
<dbReference type="PDBsum" id="6HOE"/>
<dbReference type="PDBsum" id="6HOF"/>
<dbReference type="PDBsum" id="6R1P"/>
<dbReference type="PDBsum" id="6R1S"/>
<dbReference type="PDBsum" id="7NGD"/>
<dbReference type="PDBsum" id="7NGG"/>
<dbReference type="PDBsum" id="7NGI"/>
<dbReference type="PDBsum" id="7NGJ"/>
<dbReference type="PDBsum" id="7NGK"/>
<dbReference type="PDBsum" id="7NGM"/>
<dbReference type="PDBsum" id="7NGN"/>
<dbReference type="PDBsum" id="7NGO"/>
<dbReference type="PDBsum" id="7NGR"/>
<dbReference type="PDBsum" id="7NGS"/>
<dbReference type="PDBsum" id="7NGT"/>
<dbReference type="PDBsum" id="7NGU"/>
<dbReference type="PDBsum" id="7NGW"/>
<dbReference type="PDBsum" id="7NGX"/>
<dbReference type="PDBsum" id="7NGY"/>
<dbReference type="SMR" id="P9WMC1"/>
<dbReference type="STRING" id="83332.Rv3855"/>
<dbReference type="BindingDB" id="P9WMC1"/>
<dbReference type="ChEMBL" id="CHEMBL1772929"/>
<dbReference type="DrugBank" id="DB08471">
    <property type="generic name" value="1-(thiophen-2-ylacetyl)-4-(3-thiophen-2-yl-1,2,4-oxadiazol-5-yl)piperidine"/>
</dbReference>
<dbReference type="DrugBank" id="DB08470">
    <property type="generic name" value="3-(4-fluorophenyl)-5-phenyl-4H-1,2,4-triazole"/>
</dbReference>
<dbReference type="DrugBank" id="DB02425">
    <property type="generic name" value="Hexadecyl Octanoate"/>
</dbReference>
<dbReference type="DrugBank" id="DB08469">
    <property type="generic name" value="tert-butyl 4-(3-thiophen-2-yl-1,2,4-oxadiazol-5-yl)piperidine-1-carboxylate"/>
</dbReference>
<dbReference type="PaxDb" id="83332-Rv3855"/>
<dbReference type="DNASU" id="886189"/>
<dbReference type="GeneID" id="45427859"/>
<dbReference type="GeneID" id="886189"/>
<dbReference type="KEGG" id="mtu:Rv3855"/>
<dbReference type="KEGG" id="mtv:RVBD_3855"/>
<dbReference type="TubercuList" id="Rv3855"/>
<dbReference type="eggNOG" id="COG1309">
    <property type="taxonomic scope" value="Bacteria"/>
</dbReference>
<dbReference type="InParanoid" id="P9WMC1"/>
<dbReference type="OrthoDB" id="5242520at2"/>
<dbReference type="PhylomeDB" id="P9WMC1"/>
<dbReference type="EvolutionaryTrace" id="P9WMC1"/>
<dbReference type="PRO" id="PR:P9WMC1"/>
<dbReference type="Proteomes" id="UP000001584">
    <property type="component" value="Chromosome"/>
</dbReference>
<dbReference type="GO" id="GO:0005829">
    <property type="term" value="C:cytosol"/>
    <property type="evidence" value="ECO:0007005"/>
    <property type="project" value="MTBBASE"/>
</dbReference>
<dbReference type="GO" id="GO:0003700">
    <property type="term" value="F:DNA-binding transcription factor activity"/>
    <property type="evidence" value="ECO:0000318"/>
    <property type="project" value="GO_Central"/>
</dbReference>
<dbReference type="GO" id="GO:0000976">
    <property type="term" value="F:transcription cis-regulatory region binding"/>
    <property type="evidence" value="ECO:0000318"/>
    <property type="project" value="GO_Central"/>
</dbReference>
<dbReference type="GO" id="GO:0045892">
    <property type="term" value="P:negative regulation of DNA-templated transcription"/>
    <property type="evidence" value="ECO:0000314"/>
    <property type="project" value="MTBBASE"/>
</dbReference>
<dbReference type="GO" id="GO:0006355">
    <property type="term" value="P:regulation of DNA-templated transcription"/>
    <property type="evidence" value="ECO:0000318"/>
    <property type="project" value="GO_Central"/>
</dbReference>
<dbReference type="GO" id="GO:0046677">
    <property type="term" value="P:response to antibiotic"/>
    <property type="evidence" value="ECO:0000270"/>
    <property type="project" value="MTBBASE"/>
</dbReference>
<dbReference type="FunFam" id="1.10.357.10:FF:000027">
    <property type="entry name" value="HTH-type transcriptional regulator EthR"/>
    <property type="match status" value="1"/>
</dbReference>
<dbReference type="FunFam" id="1.10.10.60:FF:000141">
    <property type="entry name" value="TetR family transcriptional regulator"/>
    <property type="match status" value="1"/>
</dbReference>
<dbReference type="Gene3D" id="1.10.10.60">
    <property type="entry name" value="Homeodomain-like"/>
    <property type="match status" value="1"/>
</dbReference>
<dbReference type="Gene3D" id="1.10.357.10">
    <property type="entry name" value="Tetracycline Repressor, domain 2"/>
    <property type="match status" value="1"/>
</dbReference>
<dbReference type="InterPro" id="IPR049397">
    <property type="entry name" value="EthR_C"/>
</dbReference>
<dbReference type="InterPro" id="IPR009057">
    <property type="entry name" value="Homeodomain-like_sf"/>
</dbReference>
<dbReference type="InterPro" id="IPR050109">
    <property type="entry name" value="HTH-type_TetR-like_transc_reg"/>
</dbReference>
<dbReference type="InterPro" id="IPR001647">
    <property type="entry name" value="HTH_TetR"/>
</dbReference>
<dbReference type="InterPro" id="IPR036271">
    <property type="entry name" value="Tet_transcr_reg_TetR-rel_C_sf"/>
</dbReference>
<dbReference type="PANTHER" id="PTHR30055:SF184">
    <property type="entry name" value="HTH-TYPE TRANSCRIPTIONAL REGULATOR ETHR"/>
    <property type="match status" value="1"/>
</dbReference>
<dbReference type="PANTHER" id="PTHR30055">
    <property type="entry name" value="HTH-TYPE TRANSCRIPTIONAL REGULATOR RUTR"/>
    <property type="match status" value="1"/>
</dbReference>
<dbReference type="Pfam" id="PF21313">
    <property type="entry name" value="EthR_C"/>
    <property type="match status" value="1"/>
</dbReference>
<dbReference type="Pfam" id="PF00440">
    <property type="entry name" value="TetR_N"/>
    <property type="match status" value="1"/>
</dbReference>
<dbReference type="PRINTS" id="PR00455">
    <property type="entry name" value="HTHTETR"/>
</dbReference>
<dbReference type="SUPFAM" id="SSF46689">
    <property type="entry name" value="Homeodomain-like"/>
    <property type="match status" value="1"/>
</dbReference>
<dbReference type="SUPFAM" id="SSF48498">
    <property type="entry name" value="Tetracyclin repressor-like, C-terminal domain"/>
    <property type="match status" value="1"/>
</dbReference>
<dbReference type="PROSITE" id="PS50977">
    <property type="entry name" value="HTH_TETR_2"/>
    <property type="match status" value="1"/>
</dbReference>
<comment type="function">
    <text evidence="3 4">Involved in the repression of the monooxygenase EthA which is responsible of the formation of the active metabolite of ethionamide (ETH).</text>
</comment>
<comment type="activity regulation">
    <text evidence="6">Inhibited by tert-butyl 4-(3-thiophen-2-yl-1,2,4-oxadiazol-5-yl) piperidine-1-carboxylate (RF1) and 1-(thiophen-2-ylacetyl)-4-(3-thiophen-2-yl-1,2,4-oxadiazol-5-yl)piperidine (RF3).</text>
</comment>
<comment type="subunit">
    <text evidence="5 6">Homodimer.</text>
</comment>
<comment type="disruption phenotype">
    <text evidence="6">Cells lacking this gene leads to ETH hypersentivity.</text>
</comment>
<comment type="miscellaneous">
    <text>Binding of inhibitors to EthR induces a conformational change in this repressor, which is then unable to bind its DNA operator, consequently allowing for increased transcription of EthA and bioactivation of ethionamide (ETH).</text>
</comment>
<keyword id="KW-0002">3D-structure</keyword>
<keyword id="KW-0238">DNA-binding</keyword>
<keyword id="KW-1185">Reference proteome</keyword>
<keyword id="KW-0678">Repressor</keyword>
<keyword id="KW-0804">Transcription</keyword>
<keyword id="KW-0805">Transcription regulation</keyword>
<organism>
    <name type="scientific">Mycobacterium tuberculosis (strain ATCC 25618 / H37Rv)</name>
    <dbReference type="NCBI Taxonomy" id="83332"/>
    <lineage>
        <taxon>Bacteria</taxon>
        <taxon>Bacillati</taxon>
        <taxon>Actinomycetota</taxon>
        <taxon>Actinomycetes</taxon>
        <taxon>Mycobacteriales</taxon>
        <taxon>Mycobacteriaceae</taxon>
        <taxon>Mycobacterium</taxon>
        <taxon>Mycobacterium tuberculosis complex</taxon>
    </lineage>
</organism>
<feature type="chain" id="PRO_0000398578" description="HTH-type transcriptional regulator EthR">
    <location>
        <begin position="1"/>
        <end position="216"/>
    </location>
</feature>
<feature type="domain" description="HTH tetR-type" evidence="1">
    <location>
        <begin position="23"/>
        <end position="83"/>
    </location>
</feature>
<feature type="DNA-binding region" description="H-T-H motif" evidence="1">
    <location>
        <begin position="46"/>
        <end position="65"/>
    </location>
</feature>
<feature type="region of interest" description="Disordered" evidence="2">
    <location>
        <begin position="1"/>
        <end position="24"/>
    </location>
</feature>
<feature type="compositionally biased region" description="Polar residues" evidence="2">
    <location>
        <begin position="1"/>
        <end position="10"/>
    </location>
</feature>
<feature type="site" description="Inhibitor-binding">
    <location>
        <position position="176"/>
    </location>
</feature>
<feature type="site" description="Inhibitor-binding">
    <location>
        <position position="179"/>
    </location>
</feature>
<feature type="helix" evidence="7">
    <location>
        <begin position="22"/>
        <end position="37"/>
    </location>
</feature>
<feature type="helix" evidence="7">
    <location>
        <begin position="42"/>
        <end position="44"/>
    </location>
</feature>
<feature type="helix" evidence="7">
    <location>
        <begin position="47"/>
        <end position="54"/>
    </location>
</feature>
<feature type="helix" evidence="7">
    <location>
        <begin position="58"/>
        <end position="64"/>
    </location>
</feature>
<feature type="helix" evidence="7">
    <location>
        <begin position="68"/>
        <end position="92"/>
    </location>
</feature>
<feature type="helix" evidence="7">
    <location>
        <begin position="99"/>
        <end position="115"/>
    </location>
</feature>
<feature type="helix" evidence="7">
    <location>
        <begin position="118"/>
        <end position="127"/>
    </location>
</feature>
<feature type="turn" evidence="7">
    <location>
        <begin position="128"/>
        <end position="130"/>
    </location>
</feature>
<feature type="helix" evidence="7">
    <location>
        <begin position="132"/>
        <end position="158"/>
    </location>
</feature>
<feature type="helix" evidence="7">
    <location>
        <begin position="168"/>
        <end position="188"/>
    </location>
</feature>
<feature type="helix" evidence="7">
    <location>
        <begin position="196"/>
        <end position="212"/>
    </location>
</feature>
<protein>
    <recommendedName>
        <fullName>HTH-type transcriptional regulator EthR</fullName>
    </recommendedName>
</protein>
<proteinExistence type="evidence at protein level"/>